<protein>
    <recommendedName>
        <fullName evidence="5">Monolignol oxidoreductase AtBBE-like 13</fullName>
        <ecNumber evidence="4">1.1.99.-</ecNumber>
    </recommendedName>
    <alternativeName>
        <fullName evidence="5">Berberine bridge enzyme-like 13</fullName>
        <shortName evidence="5">AtBBE-like 13</shortName>
    </alternativeName>
</protein>
<keyword id="KW-0134">Cell wall</keyword>
<keyword id="KW-1015">Disulfide bond</keyword>
<keyword id="KW-0274">FAD</keyword>
<keyword id="KW-0285">Flavoprotein</keyword>
<keyword id="KW-0325">Glycoprotein</keyword>
<keyword id="KW-0521">NADP</keyword>
<keyword id="KW-0547">Nucleotide-binding</keyword>
<keyword id="KW-0560">Oxidoreductase</keyword>
<keyword id="KW-1185">Reference proteome</keyword>
<keyword id="KW-0964">Secreted</keyword>
<keyword id="KW-0732">Signal</keyword>
<name>BBE13_ARATH</name>
<evidence type="ECO:0000250" key="1">
    <source>
        <dbReference type="UniProtKB" id="O64743"/>
    </source>
</evidence>
<evidence type="ECO:0000255" key="2"/>
<evidence type="ECO:0000255" key="3">
    <source>
        <dbReference type="PROSITE-ProRule" id="PRU00498"/>
    </source>
</evidence>
<evidence type="ECO:0000269" key="4">
    <source>
    </source>
</evidence>
<evidence type="ECO:0000303" key="5">
    <source>
    </source>
</evidence>
<evidence type="ECO:0000305" key="6"/>
<evidence type="ECO:0000305" key="7">
    <source>
    </source>
</evidence>
<evidence type="ECO:0000312" key="8">
    <source>
        <dbReference type="Araport" id="AT1G30760"/>
    </source>
</evidence>
<evidence type="ECO:0000312" key="9">
    <source>
        <dbReference type="EMBL" id="AAD25763.1"/>
    </source>
</evidence>
<evidence type="ECO:0000312" key="10">
    <source>
        <dbReference type="EMBL" id="AAD32926.1"/>
    </source>
</evidence>
<reference key="1">
    <citation type="journal article" date="2000" name="Nature">
        <title>Sequence and analysis of chromosome 1 of the plant Arabidopsis thaliana.</title>
        <authorList>
            <person name="Theologis A."/>
            <person name="Ecker J.R."/>
            <person name="Palm C.J."/>
            <person name="Federspiel N.A."/>
            <person name="Kaul S."/>
            <person name="White O."/>
            <person name="Alonso J."/>
            <person name="Altafi H."/>
            <person name="Araujo R."/>
            <person name="Bowman C.L."/>
            <person name="Brooks S.Y."/>
            <person name="Buehler E."/>
            <person name="Chan A."/>
            <person name="Chao Q."/>
            <person name="Chen H."/>
            <person name="Cheuk R.F."/>
            <person name="Chin C.W."/>
            <person name="Chung M.K."/>
            <person name="Conn L."/>
            <person name="Conway A.B."/>
            <person name="Conway A.R."/>
            <person name="Creasy T.H."/>
            <person name="Dewar K."/>
            <person name="Dunn P."/>
            <person name="Etgu P."/>
            <person name="Feldblyum T.V."/>
            <person name="Feng J.-D."/>
            <person name="Fong B."/>
            <person name="Fujii C.Y."/>
            <person name="Gill J.E."/>
            <person name="Goldsmith A.D."/>
            <person name="Haas B."/>
            <person name="Hansen N.F."/>
            <person name="Hughes B."/>
            <person name="Huizar L."/>
            <person name="Hunter J.L."/>
            <person name="Jenkins J."/>
            <person name="Johnson-Hopson C."/>
            <person name="Khan S."/>
            <person name="Khaykin E."/>
            <person name="Kim C.J."/>
            <person name="Koo H.L."/>
            <person name="Kremenetskaia I."/>
            <person name="Kurtz D.B."/>
            <person name="Kwan A."/>
            <person name="Lam B."/>
            <person name="Langin-Hooper S."/>
            <person name="Lee A."/>
            <person name="Lee J.M."/>
            <person name="Lenz C.A."/>
            <person name="Li J.H."/>
            <person name="Li Y.-P."/>
            <person name="Lin X."/>
            <person name="Liu S.X."/>
            <person name="Liu Z.A."/>
            <person name="Luros J.S."/>
            <person name="Maiti R."/>
            <person name="Marziali A."/>
            <person name="Militscher J."/>
            <person name="Miranda M."/>
            <person name="Nguyen M."/>
            <person name="Nierman W.C."/>
            <person name="Osborne B.I."/>
            <person name="Pai G."/>
            <person name="Peterson J."/>
            <person name="Pham P.K."/>
            <person name="Rizzo M."/>
            <person name="Rooney T."/>
            <person name="Rowley D."/>
            <person name="Sakano H."/>
            <person name="Salzberg S.L."/>
            <person name="Schwartz J.R."/>
            <person name="Shinn P."/>
            <person name="Southwick A.M."/>
            <person name="Sun H."/>
            <person name="Tallon L.J."/>
            <person name="Tambunga G."/>
            <person name="Toriumi M.J."/>
            <person name="Town C.D."/>
            <person name="Utterback T."/>
            <person name="Van Aken S."/>
            <person name="Vaysberg M."/>
            <person name="Vysotskaia V.S."/>
            <person name="Walker M."/>
            <person name="Wu D."/>
            <person name="Yu G."/>
            <person name="Fraser C.M."/>
            <person name="Venter J.C."/>
            <person name="Davis R.W."/>
        </authorList>
    </citation>
    <scope>NUCLEOTIDE SEQUENCE [LARGE SCALE GENOMIC DNA]</scope>
    <source>
        <strain>cv. Columbia</strain>
    </source>
</reference>
<reference key="2">
    <citation type="journal article" date="2017" name="Plant J.">
        <title>Araport11: a complete reannotation of the Arabidopsis thaliana reference genome.</title>
        <authorList>
            <person name="Cheng C.Y."/>
            <person name="Krishnakumar V."/>
            <person name="Chan A.P."/>
            <person name="Thibaud-Nissen F."/>
            <person name="Schobel S."/>
            <person name="Town C.D."/>
        </authorList>
    </citation>
    <scope>GENOME REANNOTATION</scope>
    <source>
        <strain>cv. Columbia</strain>
    </source>
</reference>
<reference key="3">
    <citation type="journal article" date="2003" name="Science">
        <title>Empirical analysis of transcriptional activity in the Arabidopsis genome.</title>
        <authorList>
            <person name="Yamada K."/>
            <person name="Lim J."/>
            <person name="Dale J.M."/>
            <person name="Chen H."/>
            <person name="Shinn P."/>
            <person name="Palm C.J."/>
            <person name="Southwick A.M."/>
            <person name="Wu H.C."/>
            <person name="Kim C.J."/>
            <person name="Nguyen M."/>
            <person name="Pham P.K."/>
            <person name="Cheuk R.F."/>
            <person name="Karlin-Newmann G."/>
            <person name="Liu S.X."/>
            <person name="Lam B."/>
            <person name="Sakano H."/>
            <person name="Wu T."/>
            <person name="Yu G."/>
            <person name="Miranda M."/>
            <person name="Quach H.L."/>
            <person name="Tripp M."/>
            <person name="Chang C.H."/>
            <person name="Lee J.M."/>
            <person name="Toriumi M.J."/>
            <person name="Chan M.M."/>
            <person name="Tang C.C."/>
            <person name="Onodera C.S."/>
            <person name="Deng J.M."/>
            <person name="Akiyama K."/>
            <person name="Ansari Y."/>
            <person name="Arakawa T."/>
            <person name="Banh J."/>
            <person name="Banno F."/>
            <person name="Bowser L."/>
            <person name="Brooks S.Y."/>
            <person name="Carninci P."/>
            <person name="Chao Q."/>
            <person name="Choy N."/>
            <person name="Enju A."/>
            <person name="Goldsmith A.D."/>
            <person name="Gurjal M."/>
            <person name="Hansen N.F."/>
            <person name="Hayashizaki Y."/>
            <person name="Johnson-Hopson C."/>
            <person name="Hsuan V.W."/>
            <person name="Iida K."/>
            <person name="Karnes M."/>
            <person name="Khan S."/>
            <person name="Koesema E."/>
            <person name="Ishida J."/>
            <person name="Jiang P.X."/>
            <person name="Jones T."/>
            <person name="Kawai J."/>
            <person name="Kamiya A."/>
            <person name="Meyers C."/>
            <person name="Nakajima M."/>
            <person name="Narusaka M."/>
            <person name="Seki M."/>
            <person name="Sakurai T."/>
            <person name="Satou M."/>
            <person name="Tamse R."/>
            <person name="Vaysberg M."/>
            <person name="Wallender E.K."/>
            <person name="Wong C."/>
            <person name="Yamamura Y."/>
            <person name="Yuan S."/>
            <person name="Shinozaki K."/>
            <person name="Davis R.W."/>
            <person name="Theologis A."/>
            <person name="Ecker J.R."/>
        </authorList>
    </citation>
    <scope>NUCLEOTIDE SEQUENCE [LARGE SCALE MRNA]</scope>
    <source>
        <strain>cv. Columbia</strain>
    </source>
</reference>
<reference key="4">
    <citation type="journal article" date="2015" name="J. Biol. Chem.">
        <title>Oxidation of monolignols by members of the berberine bridge enzyme family suggests a role in plant cell wall metabolism.</title>
        <authorList>
            <person name="Daniel B."/>
            <person name="Pavkov-Keller T."/>
            <person name="Steiner B."/>
            <person name="Dordic A."/>
            <person name="Gutmann A."/>
            <person name="Nidetzky B."/>
            <person name="Sensen C.W."/>
            <person name="van der Graaff E."/>
            <person name="Wallner S."/>
            <person name="Gruber K."/>
            <person name="Macheroux P."/>
        </authorList>
    </citation>
    <scope>FUNCTION</scope>
    <scope>CATALYTIC ACTIVITY</scope>
    <scope>SUBSTRATE SPECIFICITY</scope>
    <scope>GENE FAMILY</scope>
    <scope>NOMENCLATURE</scope>
</reference>
<accession>Q93ZA3</accession>
<accession>Q9SA92</accession>
<accession>Q9SY15</accession>
<proteinExistence type="evidence at protein level"/>
<feature type="signal peptide" evidence="2">
    <location>
        <begin position="1"/>
        <end position="29"/>
    </location>
</feature>
<feature type="chain" id="PRO_5008179559" description="Monolignol oxidoreductase AtBBE-like 13">
    <location>
        <begin position="30"/>
        <end position="534"/>
    </location>
</feature>
<feature type="glycosylation site" description="N-linked (GlcNAc...) asparagine" evidence="3">
    <location>
        <position position="7"/>
    </location>
</feature>
<feature type="glycosylation site" description="N-linked (GlcNAc...) asparagine" evidence="3">
    <location>
        <position position="59"/>
    </location>
</feature>
<feature type="disulfide bond" evidence="1">
    <location>
        <begin position="38"/>
        <end position="102"/>
    </location>
</feature>
<feature type="cross-link" description="6-(S-cysteinyl)-8alpha-(pros-histidyl)-FAD (His-Cys)" evidence="1">
    <location>
        <begin position="117"/>
        <end position="181"/>
    </location>
</feature>
<dbReference type="EC" id="1.1.99.-" evidence="4"/>
<dbReference type="EMBL" id="AC004135">
    <property type="protein sequence ID" value="AAD32926.1"/>
    <property type="status" value="ALT_SEQ"/>
    <property type="molecule type" value="Genomic_DNA"/>
</dbReference>
<dbReference type="EMBL" id="AC007060">
    <property type="protein sequence ID" value="AAD25763.1"/>
    <property type="status" value="ALT_SEQ"/>
    <property type="molecule type" value="Genomic_DNA"/>
</dbReference>
<dbReference type="EMBL" id="CP002684">
    <property type="protein sequence ID" value="AEE31270.1"/>
    <property type="molecule type" value="Genomic_DNA"/>
</dbReference>
<dbReference type="EMBL" id="AY057687">
    <property type="protein sequence ID" value="AAL15318.1"/>
    <property type="molecule type" value="mRNA"/>
</dbReference>
<dbReference type="EMBL" id="BT004513">
    <property type="protein sequence ID" value="AAO42759.1"/>
    <property type="molecule type" value="mRNA"/>
</dbReference>
<dbReference type="PIR" id="D86433">
    <property type="entry name" value="D86433"/>
</dbReference>
<dbReference type="RefSeq" id="NP_001319117.1">
    <property type="nucleotide sequence ID" value="NM_001332928.1"/>
</dbReference>
<dbReference type="SMR" id="Q93ZA3"/>
<dbReference type="FunCoup" id="Q93ZA3">
    <property type="interactions" value="205"/>
</dbReference>
<dbReference type="STRING" id="3702.Q93ZA3"/>
<dbReference type="GlyGen" id="Q93ZA3">
    <property type="glycosylation" value="2 sites"/>
</dbReference>
<dbReference type="PaxDb" id="3702-AT1G30760.1"/>
<dbReference type="ProteomicsDB" id="241125"/>
<dbReference type="EnsemblPlants" id="AT1G30760.1">
    <property type="protein sequence ID" value="AT1G30760.1"/>
    <property type="gene ID" value="AT1G30760"/>
</dbReference>
<dbReference type="GeneID" id="839958"/>
<dbReference type="Gramene" id="AT1G30760.1">
    <property type="protein sequence ID" value="AT1G30760.1"/>
    <property type="gene ID" value="AT1G30760"/>
</dbReference>
<dbReference type="KEGG" id="ath:AT1G30760"/>
<dbReference type="Araport" id="AT1G30760"/>
<dbReference type="TAIR" id="AT1G30760">
    <property type="gene designation" value="ATBBE-LIKE 13"/>
</dbReference>
<dbReference type="eggNOG" id="ENOG502QQWK">
    <property type="taxonomic scope" value="Eukaryota"/>
</dbReference>
<dbReference type="HOGENOM" id="CLU_018354_6_0_1"/>
<dbReference type="InParanoid" id="Q93ZA3"/>
<dbReference type="PhylomeDB" id="Q93ZA3"/>
<dbReference type="BRENDA" id="1.21.3.3">
    <property type="organism ID" value="399"/>
</dbReference>
<dbReference type="PRO" id="PR:Q93ZA3"/>
<dbReference type="Proteomes" id="UP000006548">
    <property type="component" value="Chromosome 1"/>
</dbReference>
<dbReference type="ExpressionAtlas" id="Q93ZA3">
    <property type="expression patterns" value="baseline and differential"/>
</dbReference>
<dbReference type="GO" id="GO:0005576">
    <property type="term" value="C:extracellular region"/>
    <property type="evidence" value="ECO:0007669"/>
    <property type="project" value="UniProtKB-KW"/>
</dbReference>
<dbReference type="GO" id="GO:0009505">
    <property type="term" value="C:plant-type cell wall"/>
    <property type="evidence" value="ECO:0000250"/>
    <property type="project" value="UniProtKB"/>
</dbReference>
<dbReference type="GO" id="GO:0045551">
    <property type="term" value="F:cinnamyl-alcohol dehydrogenase activity"/>
    <property type="evidence" value="ECO:0000314"/>
    <property type="project" value="TAIR"/>
</dbReference>
<dbReference type="GO" id="GO:0050268">
    <property type="term" value="F:coniferyl-alcohol dehydrogenase activity"/>
    <property type="evidence" value="ECO:0000314"/>
    <property type="project" value="UniProtKB"/>
</dbReference>
<dbReference type="GO" id="GO:0071949">
    <property type="term" value="F:FAD binding"/>
    <property type="evidence" value="ECO:0007669"/>
    <property type="project" value="InterPro"/>
</dbReference>
<dbReference type="FunFam" id="3.30.43.10:FF:000004">
    <property type="entry name" value="Berberine bridge enzyme-like 15"/>
    <property type="match status" value="1"/>
</dbReference>
<dbReference type="Gene3D" id="3.30.465.10">
    <property type="match status" value="1"/>
</dbReference>
<dbReference type="Gene3D" id="3.40.462.20">
    <property type="match status" value="1"/>
</dbReference>
<dbReference type="Gene3D" id="3.30.43.10">
    <property type="entry name" value="Uridine Diphospho-n-acetylenolpyruvylglucosamine Reductase, domain 2"/>
    <property type="match status" value="1"/>
</dbReference>
<dbReference type="InterPro" id="IPR012951">
    <property type="entry name" value="BBE"/>
</dbReference>
<dbReference type="InterPro" id="IPR016166">
    <property type="entry name" value="FAD-bd_PCMH"/>
</dbReference>
<dbReference type="InterPro" id="IPR036318">
    <property type="entry name" value="FAD-bd_PCMH-like_sf"/>
</dbReference>
<dbReference type="InterPro" id="IPR016167">
    <property type="entry name" value="FAD-bd_PCMH_sub1"/>
</dbReference>
<dbReference type="InterPro" id="IPR016169">
    <property type="entry name" value="FAD-bd_PCMH_sub2"/>
</dbReference>
<dbReference type="InterPro" id="IPR006094">
    <property type="entry name" value="Oxid_FAD_bind_N"/>
</dbReference>
<dbReference type="PANTHER" id="PTHR32448">
    <property type="entry name" value="OS08G0158400 PROTEIN"/>
    <property type="match status" value="1"/>
</dbReference>
<dbReference type="Pfam" id="PF08031">
    <property type="entry name" value="BBE"/>
    <property type="match status" value="1"/>
</dbReference>
<dbReference type="Pfam" id="PF01565">
    <property type="entry name" value="FAD_binding_4"/>
    <property type="match status" value="1"/>
</dbReference>
<dbReference type="SUPFAM" id="SSF56176">
    <property type="entry name" value="FAD-binding/transporter-associated domain-like"/>
    <property type="match status" value="1"/>
</dbReference>
<dbReference type="PROSITE" id="PS51387">
    <property type="entry name" value="FAD_PCMH"/>
    <property type="match status" value="1"/>
</dbReference>
<gene>
    <name evidence="8" type="ordered locus">At1g30760</name>
    <name evidence="10" type="ORF">T17H7.1</name>
    <name evidence="9" type="ORF">T5I8.22</name>
</gene>
<comment type="function">
    <text evidence="4">Mediates oxidation of p-hydroxylated derivatives of cinnamyl alcohol (i.e. the monolignols p-coumaryl-, coniferyl-, and sinapyl alcohol) to their corresponding aldehydes. The electron acceptor required for these reactions is not known, but does not seem to be dioxygen. Is much less efficient towards cinnamyl alcohol.</text>
</comment>
<comment type="catalytic activity">
    <reaction evidence="4">
        <text>(E)-4-coumaroyl alcohol + A = (E)-4-coumaraldehyde + AH2</text>
        <dbReference type="Rhea" id="RHEA:76451"/>
        <dbReference type="ChEBI" id="CHEBI:13193"/>
        <dbReference type="ChEBI" id="CHEBI:17499"/>
        <dbReference type="ChEBI" id="CHEBI:28353"/>
        <dbReference type="ChEBI" id="CHEBI:64555"/>
    </reaction>
    <physiologicalReaction direction="left-to-right" evidence="7">
        <dbReference type="Rhea" id="RHEA:76452"/>
    </physiologicalReaction>
</comment>
<comment type="catalytic activity">
    <reaction evidence="4">
        <text>(E)-coniferol + A = (E)-coniferaldehyde + AH2</text>
        <dbReference type="Rhea" id="RHEA:76455"/>
        <dbReference type="ChEBI" id="CHEBI:13193"/>
        <dbReference type="ChEBI" id="CHEBI:16547"/>
        <dbReference type="ChEBI" id="CHEBI:17499"/>
        <dbReference type="ChEBI" id="CHEBI:17745"/>
    </reaction>
    <physiologicalReaction direction="left-to-right" evidence="7">
        <dbReference type="Rhea" id="RHEA:76456"/>
    </physiologicalReaction>
</comment>
<comment type="catalytic activity">
    <reaction evidence="4">
        <text>(E)-sinapyl alcohol + A = (E)-sinapaldehyde + AH2</text>
        <dbReference type="Rhea" id="RHEA:76459"/>
        <dbReference type="ChEBI" id="CHEBI:13193"/>
        <dbReference type="ChEBI" id="CHEBI:17499"/>
        <dbReference type="ChEBI" id="CHEBI:27949"/>
        <dbReference type="ChEBI" id="CHEBI:64557"/>
    </reaction>
    <physiologicalReaction direction="left-to-right" evidence="7">
        <dbReference type="Rhea" id="RHEA:76460"/>
    </physiologicalReaction>
</comment>
<comment type="cofactor">
    <cofactor evidence="1">
        <name>FAD</name>
        <dbReference type="ChEBI" id="CHEBI:57692"/>
    </cofactor>
    <text evidence="1">Binds 1 FAD per subunit in a bicovalent manner.</text>
</comment>
<comment type="pathway">
    <text>Phenylpropanoid metabolism.</text>
</comment>
<comment type="subcellular location">
    <subcellularLocation>
        <location evidence="1">Secreted</location>
        <location evidence="1">Cell wall</location>
    </subcellularLocation>
</comment>
<comment type="PTM">
    <text evidence="1">The FAD cofactor is bound via a bicovalent 6-S-cysteinyl, 8alpha-N1-histidyl FAD linkage.</text>
</comment>
<comment type="similarity">
    <text evidence="6">Belongs to the oxygen-dependent FAD-linked oxidoreductase family.</text>
</comment>
<comment type="sequence caution" evidence="6">
    <conflict type="erroneous gene model prediction">
        <sequence resource="EMBL-CDS" id="AAD25763"/>
    </conflict>
</comment>
<comment type="sequence caution" evidence="6">
    <conflict type="erroneous gene model prediction">
        <sequence resource="EMBL-CDS" id="AAD32926"/>
    </conflict>
</comment>
<organism>
    <name type="scientific">Arabidopsis thaliana</name>
    <name type="common">Mouse-ear cress</name>
    <dbReference type="NCBI Taxonomy" id="3702"/>
    <lineage>
        <taxon>Eukaryota</taxon>
        <taxon>Viridiplantae</taxon>
        <taxon>Streptophyta</taxon>
        <taxon>Embryophyta</taxon>
        <taxon>Tracheophyta</taxon>
        <taxon>Spermatophyta</taxon>
        <taxon>Magnoliopsida</taxon>
        <taxon>eudicotyledons</taxon>
        <taxon>Gunneridae</taxon>
        <taxon>Pentapetalae</taxon>
        <taxon>rosids</taxon>
        <taxon>malvids</taxon>
        <taxon>Brassicales</taxon>
        <taxon>Brassicaceae</taxon>
        <taxon>Camelineae</taxon>
        <taxon>Arabidopsis</taxon>
    </lineage>
</organism>
<sequence>MAFVLMNNTNAFLVTLLLLSLSYIPLSFSTIQQDFVMCLVDNSDASFPMDSSFFTHDLNASSFKLALETSAQNLRYLMPSNPKPEFIFEPLYETHVQAAVLCAKKLKLHLRLRSGGHDYEGLSYVSEMETAFVIVDLSKLRQISVDIESNSAWVHAGASIGEVYYRIQEKSKIHGFPAGLCTSLGIGGHIIGGAYGSMMRKFGLGADNVLDARIVDADGKILNRAAMGEDVFWAIRGGGGGSFGVILAWKIKLVPVPEIVTVFTVTRTLEQDGTKLLYKWQQVADKLDEDLFIRVIIQPTSKTPKSKERTISTSYQGQFLGDANRLLQVMQRSFPQLGLTKKDCLETSWIKSVMYIAGFPSTAPSEALLDGKSLFKNYFKAKSDYVEEPIPVEGLEGLWEKLLEEDSPLTIWNPYGGMMAKIPETETPFPHRSGTLFKIQWLTLWQDGKTSEAKHMGWMREMYSYMEQYVSKSPRSAYVNYRDLDLGMNGKGSDAREWGNRYFKGNFERLVEIKAKFDPENFFRHEQSIPTELE</sequence>